<sequence>MSIGVPIKVLHEAEGHIVTCETNTGEVYRGKLIEAEDNMNCQMSNITVTYRDGRVAQLEQVYIRGSKIRFLILPDMLKNAPMLKSMKNKNQGSGAGRGKAAILKAQVAARGRGRGMGRGNIFQKRR</sequence>
<gene>
    <name type="primary">SNRPD3</name>
</gene>
<evidence type="ECO:0000250" key="1">
    <source>
        <dbReference type="UniProtKB" id="P62320"/>
    </source>
</evidence>
<evidence type="ECO:0000255" key="2">
    <source>
        <dbReference type="PROSITE-ProRule" id="PRU01346"/>
    </source>
</evidence>
<evidence type="ECO:0000269" key="3">
    <source>
    </source>
</evidence>
<evidence type="ECO:0000269" key="4">
    <source>
    </source>
</evidence>
<evidence type="ECO:0000269" key="5">
    <source>
    </source>
</evidence>
<evidence type="ECO:0000269" key="6">
    <source>
    </source>
</evidence>
<evidence type="ECO:0000269" key="7">
    <source>
    </source>
</evidence>
<evidence type="ECO:0000269" key="8">
    <source>
    </source>
</evidence>
<evidence type="ECO:0000269" key="9">
    <source>
    </source>
</evidence>
<evidence type="ECO:0000269" key="10">
    <source>
    </source>
</evidence>
<evidence type="ECO:0000269" key="11">
    <source>
    </source>
</evidence>
<evidence type="ECO:0000269" key="12">
    <source>
    </source>
</evidence>
<evidence type="ECO:0000269" key="13">
    <source>
    </source>
</evidence>
<evidence type="ECO:0000269" key="14">
    <source>
    </source>
</evidence>
<evidence type="ECO:0000269" key="15">
    <source>
    </source>
</evidence>
<evidence type="ECO:0000269" key="16">
    <source>
    </source>
</evidence>
<evidence type="ECO:0000269" key="17">
    <source>
    </source>
</evidence>
<evidence type="ECO:0000269" key="18">
    <source>
    </source>
</evidence>
<evidence type="ECO:0000269" key="19">
    <source>
    </source>
</evidence>
<evidence type="ECO:0000269" key="20">
    <source>
    </source>
</evidence>
<evidence type="ECO:0000269" key="21">
    <source>
    </source>
</evidence>
<evidence type="ECO:0000269" key="22">
    <source>
    </source>
</evidence>
<evidence type="ECO:0000269" key="23">
    <source>
    </source>
</evidence>
<evidence type="ECO:0000303" key="24">
    <source>
    </source>
</evidence>
<evidence type="ECO:0000305" key="25"/>
<evidence type="ECO:0007744" key="26">
    <source>
        <dbReference type="PDB" id="3JCR"/>
    </source>
</evidence>
<evidence type="ECO:0007744" key="27">
    <source>
        <dbReference type="PDB" id="4PJO"/>
    </source>
</evidence>
<evidence type="ECO:0007744" key="28">
    <source>
        <dbReference type="PDB" id="5MQF"/>
    </source>
</evidence>
<evidence type="ECO:0007744" key="29">
    <source>
        <dbReference type="PDB" id="5O9Z"/>
    </source>
</evidence>
<evidence type="ECO:0007744" key="30">
    <source>
        <dbReference type="PDB" id="5XJC"/>
    </source>
</evidence>
<evidence type="ECO:0007744" key="31">
    <source>
        <dbReference type="PDB" id="6Y5Q"/>
    </source>
</evidence>
<evidence type="ECO:0007744" key="32">
    <source>
        <dbReference type="PDB" id="7DVQ"/>
    </source>
</evidence>
<evidence type="ECO:0007744" key="33">
    <source>
        <dbReference type="PDB" id="8HK1"/>
    </source>
</evidence>
<evidence type="ECO:0007744" key="34">
    <source>
    </source>
</evidence>
<evidence type="ECO:0007829" key="35">
    <source>
        <dbReference type="PDB" id="1D3B"/>
    </source>
</evidence>
<evidence type="ECO:0007829" key="36">
    <source>
        <dbReference type="PDB" id="7EVO"/>
    </source>
</evidence>
<evidence type="ECO:0007829" key="37">
    <source>
        <dbReference type="PDB" id="7QTT"/>
    </source>
</evidence>
<evidence type="ECO:0007829" key="38">
    <source>
        <dbReference type="PDB" id="8Q91"/>
    </source>
</evidence>
<proteinExistence type="evidence at protein level"/>
<feature type="initiator methionine" description="Removed" evidence="34">
    <location>
        <position position="1"/>
    </location>
</feature>
<feature type="chain" id="PRO_0000122214" description="Small nuclear ribonucleoprotein Sm D3">
    <location>
        <begin position="2"/>
        <end position="126"/>
    </location>
</feature>
<feature type="domain" description="Sm" evidence="2">
    <location>
        <begin position="5"/>
        <end position="77"/>
    </location>
</feature>
<feature type="repeat" description="1">
    <location>
        <begin position="110"/>
        <end position="111"/>
    </location>
</feature>
<feature type="repeat" description="2">
    <location>
        <begin position="112"/>
        <end position="113"/>
    </location>
</feature>
<feature type="repeat" description="3">
    <location>
        <begin position="114"/>
        <end position="115"/>
    </location>
</feature>
<feature type="repeat" description="4">
    <location>
        <begin position="116"/>
        <end position="117"/>
    </location>
</feature>
<feature type="repeat" description="5">
    <location>
        <begin position="118"/>
        <end position="119"/>
    </location>
</feature>
<feature type="region of interest" description="5 X 2 AA tandem repeats of [RM]-G; required for interaction with SMN1" evidence="9">
    <location>
        <begin position="110"/>
        <end position="119"/>
    </location>
</feature>
<feature type="modified residue" description="N-acetylserine" evidence="34">
    <location>
        <position position="2"/>
    </location>
</feature>
<feature type="splice variant" id="VSP_056478" description="In isoform 2." evidence="24">
    <original>VAARGRGRGMGRGNIFQKRR</original>
    <variation>GYLSSLEWVLVHIC</variation>
    <location>
        <begin position="107"/>
        <end position="126"/>
    </location>
</feature>
<feature type="helix" evidence="35">
    <location>
        <begin position="6"/>
        <end position="12"/>
    </location>
</feature>
<feature type="turn" evidence="35">
    <location>
        <begin position="13"/>
        <end position="15"/>
    </location>
</feature>
<feature type="strand" evidence="35">
    <location>
        <begin position="16"/>
        <end position="22"/>
    </location>
</feature>
<feature type="strand" evidence="35">
    <location>
        <begin position="27"/>
        <end position="35"/>
    </location>
</feature>
<feature type="strand" evidence="38">
    <location>
        <begin position="37"/>
        <end position="39"/>
    </location>
</feature>
<feature type="strand" evidence="35">
    <location>
        <begin position="41"/>
        <end position="49"/>
    </location>
</feature>
<feature type="turn" evidence="37">
    <location>
        <begin position="50"/>
        <end position="53"/>
    </location>
</feature>
<feature type="strand" evidence="35">
    <location>
        <begin position="55"/>
        <end position="63"/>
    </location>
</feature>
<feature type="helix" evidence="35">
    <location>
        <begin position="65"/>
        <end position="67"/>
    </location>
</feature>
<feature type="strand" evidence="35">
    <location>
        <begin position="68"/>
        <end position="73"/>
    </location>
</feature>
<feature type="strand" evidence="36">
    <location>
        <begin position="77"/>
        <end position="81"/>
    </location>
</feature>
<comment type="function">
    <text evidence="1 8 10 13 14 16 17 18 19 20 21 22">Plays a role in pre-mRNA splicing as a core component of the spliceosomal U1, U2, U4 and U5 small nuclear ribonucleoproteins (snRNPs), the building blocks of the spliceosome (PubMed:11991638, PubMed:18984161, PubMed:19325628, PubMed:25555158, PubMed:26912367, PubMed:28076346, PubMed:28502770, PubMed:28781166, PubMed:32494006). Component of both the pre-catalytic spliceosome B complex and activated spliceosome C complexes (PubMed:11991638, PubMed:28076346, PubMed:28502770, PubMed:28781166). As a component of the minor spliceosome, involved in the splicing of U12-type introns in pre-mRNAs (PubMed:15146077, PubMed:33509932). As part of the U7 snRNP it is involved in histone pre-mRNA 3'-end processing (By similarity).</text>
</comment>
<comment type="subunit">
    <text evidence="3 4 5 6 8 9 10 11 13 14 15 16 17 18 19 20 21 22 23">Core component of the spliceosomal U1, U2, U4 and U5 small nuclear ribonucleoproteins (snRNPs), the building blocks of the spliceosome (PubMed:10025403, PubMed:11991638, PubMed:19325628, PubMed:21516107, PubMed:25555158, PubMed:26912367, PubMed:28076346, PubMed:28502770, PubMed:28781166, PubMed:32494006, PubMed:36797247). Most spliceosomal snRNPs contain a common set of Sm proteins, SNRPB, SNRPD1, SNRPD2, SNRPD3, SNRPE, SNRPF and SNRPG that assemble in a heptameric protein ring on the Sm site of the small nuclear RNA to form the core snRNP (PubMed:10025403, PubMed:19325628, PubMed:21516107, PubMed:25555158, PubMed:26912367, PubMed:28076346, PubMed:28502770, PubMed:28781166). Component of the U1 snRNP (PubMed:19325628, PubMed:25555158). The U1 snRNP is composed of the U1 snRNA and the 7 core Sm proteins SNRPB, SNRPD1, SNRPD2, SNRPD3, SNRPE, SNRPF and SNRPG, and at least three U1 snRNP-specific proteins SNRNP70/U1-70K, SNRPA/U1-A and SNRPC/U1-C (PubMed:19325628, PubMed:25555158). Component of the U4/U6-U5 tri-snRNP complex composed of the U4, U6 and U5 snRNAs and at least PRPF3, PRPF4, PRPF6, PRPF8, PRPF31, SNRNP200, TXNL4A, SNRNP40, SNRPB, SNRPD1, SNRPD2, SNRPD3, SNRPE, SNRPF, SNRPG, DDX23, CD2BP2, PPIH, SNU13, EFTUD2, SART1 and USP39, plus LSM2, LSM3, LSM4, LSM5, LSM6, LSM7 and LSM8 (PubMed:26912367). Component of the U7 snRNP complex, or U7 Sm protein core complex, that is composed of the U7 snRNA and at least LSM10, LSM11, SNRPB, SNRPD3, SNRPE, SNRPF and SNRPG; the complex does not contain SNRPD1 and SNRPD2 (PubMed:11574479). Component of the minor spliceosome, which splices U12-type introns (PubMed:15146077, PubMed:33509932). Part of the SMN-Sm complex that contains SMN1, GEMIN2/SIP1, DDX20/GEMIN3, GEMIN4, GEMIN5, GEMIN6, GEMIN7, GEMIN8, STRAP/UNRIP and the Sm proteins SNRPB, SNRPD1, SNRPD2, SNRPD3, SNRPE, SNRPF and SNRPG; catalyzes core snRNPs assembly (PubMed:16314521). Forms a 6S pICln-Sm complex composed of CLNS1A/pICln, SNRPD1, SNRPD2, SNRPE, SNRPF and SNRPG; ring-like structure where CLNS1A/pICln mimics additional Sm proteins and which is unable to assemble into the core snRNP. Interacts (via C-terminus) with SMN1 (via Tudor domain); the interaction is direct (PubMed:10500148, PubMed:11135666, PubMed:12628254).</text>
</comment>
<comment type="interaction">
    <interactant intactId="EBI-372789">
        <id>P62318</id>
    </interactant>
    <interactant intactId="EBI-930964">
        <id>P54253</id>
        <label>ATXN1</label>
    </interactant>
    <organismsDiffer>false</organismsDiffer>
    <experiments>3</experiments>
</comment>
<comment type="interaction">
    <interactant intactId="EBI-372789">
        <id>P62318</id>
    </interactant>
    <interactant intactId="EBI-724693">
        <id>P54105</id>
        <label>CLNS1A</label>
    </interactant>
    <organismsDiffer>false</organismsDiffer>
    <experiments>11</experiments>
</comment>
<comment type="interaction">
    <interactant intactId="EBI-372789">
        <id>P62318</id>
    </interactant>
    <interactant intactId="EBI-711389">
        <id>P84090</id>
        <label>ERH</label>
    </interactant>
    <organismsDiffer>false</organismsDiffer>
    <experiments>3</experiments>
</comment>
<comment type="interaction">
    <interactant intactId="EBI-372789">
        <id>P62318</id>
    </interactant>
    <interactant intactId="EBI-348239">
        <id>P62310</id>
        <label>LSM3</label>
    </interactant>
    <organismsDiffer>false</organismsDiffer>
    <experiments>5</experiments>
</comment>
<comment type="interaction">
    <interactant intactId="EBI-372789">
        <id>P62318</id>
    </interactant>
    <interactant intactId="EBI-348372">
        <id>Q9UK45</id>
        <label>LSM7</label>
    </interactant>
    <organismsDiffer>false</organismsDiffer>
    <experiments>3</experiments>
</comment>
<comment type="interaction">
    <interactant intactId="EBI-372789">
        <id>P62318</id>
    </interactant>
    <interactant intactId="EBI-741158">
        <id>Q96HA8</id>
        <label>NTAQ1</label>
    </interactant>
    <organismsDiffer>false</organismsDiffer>
    <experiments>3</experiments>
</comment>
<comment type="interaction">
    <interactant intactId="EBI-372789">
        <id>P62318</id>
    </interactant>
    <interactant intactId="EBI-2462271">
        <id>Q15428</id>
        <label>SF3A2</label>
    </interactant>
    <organismsDiffer>false</organismsDiffer>
    <experiments>2</experiments>
</comment>
<comment type="interaction">
    <interactant intactId="EBI-372789">
        <id>P62318</id>
    </interactant>
    <interactant intactId="EBI-372458">
        <id>P14678</id>
        <label>SNRPB</label>
    </interactant>
    <organismsDiffer>false</organismsDiffer>
    <experiments>8</experiments>
</comment>
<comment type="interaction">
    <interactant intactId="EBI-372789">
        <id>P62318</id>
    </interactant>
    <interactant intactId="EBI-1053651">
        <id>P08579</id>
        <label>SNRPB2</label>
    </interactant>
    <organismsDiffer>false</organismsDiffer>
    <experiments>3</experiments>
</comment>
<comment type="interaction">
    <interactant intactId="EBI-372789">
        <id>P62318</id>
    </interactant>
    <interactant intactId="EBI-539478">
        <id>Q96SB4</id>
        <label>SRPK1</label>
    </interactant>
    <organismsDiffer>false</organismsDiffer>
    <experiments>2</experiments>
</comment>
<comment type="subcellular location">
    <subcellularLocation>
        <location evidence="13">Cytoplasm</location>
        <location evidence="13">Cytosol</location>
    </subcellularLocation>
    <subcellularLocation>
        <location evidence="6 8 17 18 19 20">Nucleus</location>
    </subcellularLocation>
    <text evidence="25">SMN-mediated assembly into core snRNPs occurs in the cytosol before SMN-mediated transport to the nucleus to be included in spliceosomes.</text>
</comment>
<comment type="alternative products">
    <event type="alternative splicing"/>
    <isoform>
        <id>P62318-1</id>
        <name>1</name>
        <sequence type="displayed"/>
    </isoform>
    <isoform>
        <id>P62318-2</id>
        <name>2</name>
        <sequence type="described" ref="VSP_056478"/>
    </isoform>
</comment>
<comment type="PTM">
    <text evidence="7 12">Methylated on arginine residues by PRMT5 and PRMT7; probable asymmetric dimethylation which is required for assembly and biogenesis of snRNPs.</text>
</comment>
<comment type="miscellaneous">
    <text>In the autoimmune disease systemic lupus erythematosus, antinuclear antibodies are developed with Sm specificity.</text>
</comment>
<comment type="similarity">
    <text evidence="25">Belongs to the snRNP core protein family.</text>
</comment>
<reference key="1">
    <citation type="journal article" date="1994" name="Proc. Natl. Acad. Sci. U.S.A.">
        <title>cDNA cloning of the Sm proteins D2 and D3 from human small nuclear ribonucleoproteins: evidence for a direct D1-D2 interaction.</title>
        <authorList>
            <person name="Lehmeier T."/>
            <person name="Raker V."/>
            <person name="Hermann H."/>
            <person name="Luehrmann R."/>
        </authorList>
    </citation>
    <scope>NUCLEOTIDE SEQUENCE [MRNA] (ISOFORM 1)</scope>
    <scope>PARTIAL PROTEIN SEQUENCE</scope>
</reference>
<reference key="2">
    <citation type="journal article" date="2004" name="Genome Biol.">
        <title>A genome annotation-driven approach to cloning the human ORFeome.</title>
        <authorList>
            <person name="Collins J.E."/>
            <person name="Wright C.L."/>
            <person name="Edwards C.A."/>
            <person name="Davis M.P."/>
            <person name="Grinham J.A."/>
            <person name="Cole C.G."/>
            <person name="Goward M.E."/>
            <person name="Aguado B."/>
            <person name="Mallya M."/>
            <person name="Mokrab Y."/>
            <person name="Huckle E.J."/>
            <person name="Beare D.M."/>
            <person name="Dunham I."/>
        </authorList>
    </citation>
    <scope>NUCLEOTIDE SEQUENCE [LARGE SCALE MRNA] (ISOFORM 1)</scope>
</reference>
<reference key="3">
    <citation type="journal article" date="2004" name="Nat. Genet.">
        <title>Complete sequencing and characterization of 21,243 full-length human cDNAs.</title>
        <authorList>
            <person name="Ota T."/>
            <person name="Suzuki Y."/>
            <person name="Nishikawa T."/>
            <person name="Otsuki T."/>
            <person name="Sugiyama T."/>
            <person name="Irie R."/>
            <person name="Wakamatsu A."/>
            <person name="Hayashi K."/>
            <person name="Sato H."/>
            <person name="Nagai K."/>
            <person name="Kimura K."/>
            <person name="Makita H."/>
            <person name="Sekine M."/>
            <person name="Obayashi M."/>
            <person name="Nishi T."/>
            <person name="Shibahara T."/>
            <person name="Tanaka T."/>
            <person name="Ishii S."/>
            <person name="Yamamoto J."/>
            <person name="Saito K."/>
            <person name="Kawai Y."/>
            <person name="Isono Y."/>
            <person name="Nakamura Y."/>
            <person name="Nagahari K."/>
            <person name="Murakami K."/>
            <person name="Yasuda T."/>
            <person name="Iwayanagi T."/>
            <person name="Wagatsuma M."/>
            <person name="Shiratori A."/>
            <person name="Sudo H."/>
            <person name="Hosoiri T."/>
            <person name="Kaku Y."/>
            <person name="Kodaira H."/>
            <person name="Kondo H."/>
            <person name="Sugawara M."/>
            <person name="Takahashi M."/>
            <person name="Kanda K."/>
            <person name="Yokoi T."/>
            <person name="Furuya T."/>
            <person name="Kikkawa E."/>
            <person name="Omura Y."/>
            <person name="Abe K."/>
            <person name="Kamihara K."/>
            <person name="Katsuta N."/>
            <person name="Sato K."/>
            <person name="Tanikawa M."/>
            <person name="Yamazaki M."/>
            <person name="Ninomiya K."/>
            <person name="Ishibashi T."/>
            <person name="Yamashita H."/>
            <person name="Murakawa K."/>
            <person name="Fujimori K."/>
            <person name="Tanai H."/>
            <person name="Kimata M."/>
            <person name="Watanabe M."/>
            <person name="Hiraoka S."/>
            <person name="Chiba Y."/>
            <person name="Ishida S."/>
            <person name="Ono Y."/>
            <person name="Takiguchi S."/>
            <person name="Watanabe S."/>
            <person name="Yosida M."/>
            <person name="Hotuta T."/>
            <person name="Kusano J."/>
            <person name="Kanehori K."/>
            <person name="Takahashi-Fujii A."/>
            <person name="Hara H."/>
            <person name="Tanase T.-O."/>
            <person name="Nomura Y."/>
            <person name="Togiya S."/>
            <person name="Komai F."/>
            <person name="Hara R."/>
            <person name="Takeuchi K."/>
            <person name="Arita M."/>
            <person name="Imose N."/>
            <person name="Musashino K."/>
            <person name="Yuuki H."/>
            <person name="Oshima A."/>
            <person name="Sasaki N."/>
            <person name="Aotsuka S."/>
            <person name="Yoshikawa Y."/>
            <person name="Matsunawa H."/>
            <person name="Ichihara T."/>
            <person name="Shiohata N."/>
            <person name="Sano S."/>
            <person name="Moriya S."/>
            <person name="Momiyama H."/>
            <person name="Satoh N."/>
            <person name="Takami S."/>
            <person name="Terashima Y."/>
            <person name="Suzuki O."/>
            <person name="Nakagawa S."/>
            <person name="Senoh A."/>
            <person name="Mizoguchi H."/>
            <person name="Goto Y."/>
            <person name="Shimizu F."/>
            <person name="Wakebe H."/>
            <person name="Hishigaki H."/>
            <person name="Watanabe T."/>
            <person name="Sugiyama A."/>
            <person name="Takemoto M."/>
            <person name="Kawakami B."/>
            <person name="Yamazaki M."/>
            <person name="Watanabe K."/>
            <person name="Kumagai A."/>
            <person name="Itakura S."/>
            <person name="Fukuzumi Y."/>
            <person name="Fujimori Y."/>
            <person name="Komiyama M."/>
            <person name="Tashiro H."/>
            <person name="Tanigami A."/>
            <person name="Fujiwara T."/>
            <person name="Ono T."/>
            <person name="Yamada K."/>
            <person name="Fujii Y."/>
            <person name="Ozaki K."/>
            <person name="Hirao M."/>
            <person name="Ohmori Y."/>
            <person name="Kawabata A."/>
            <person name="Hikiji T."/>
            <person name="Kobatake N."/>
            <person name="Inagaki H."/>
            <person name="Ikema Y."/>
            <person name="Okamoto S."/>
            <person name="Okitani R."/>
            <person name="Kawakami T."/>
            <person name="Noguchi S."/>
            <person name="Itoh T."/>
            <person name="Shigeta K."/>
            <person name="Senba T."/>
            <person name="Matsumura K."/>
            <person name="Nakajima Y."/>
            <person name="Mizuno T."/>
            <person name="Morinaga M."/>
            <person name="Sasaki M."/>
            <person name="Togashi T."/>
            <person name="Oyama M."/>
            <person name="Hata H."/>
            <person name="Watanabe M."/>
            <person name="Komatsu T."/>
            <person name="Mizushima-Sugano J."/>
            <person name="Satoh T."/>
            <person name="Shirai Y."/>
            <person name="Takahashi Y."/>
            <person name="Nakagawa K."/>
            <person name="Okumura K."/>
            <person name="Nagase T."/>
            <person name="Nomura N."/>
            <person name="Kikuchi H."/>
            <person name="Masuho Y."/>
            <person name="Yamashita R."/>
            <person name="Nakai K."/>
            <person name="Yada T."/>
            <person name="Nakamura Y."/>
            <person name="Ohara O."/>
            <person name="Isogai T."/>
            <person name="Sugano S."/>
        </authorList>
    </citation>
    <scope>NUCLEOTIDE SEQUENCE [LARGE SCALE MRNA] (ISOFORM 2)</scope>
    <source>
        <tissue>Thalamus</tissue>
    </source>
</reference>
<reference key="4">
    <citation type="journal article" date="2008" name="Nat. Methods">
        <title>Human protein factory for converting the transcriptome into an in vitro-expressed proteome.</title>
        <authorList>
            <person name="Goshima N."/>
            <person name="Kawamura Y."/>
            <person name="Fukumoto A."/>
            <person name="Miura A."/>
            <person name="Honma R."/>
            <person name="Satoh R."/>
            <person name="Wakamatsu A."/>
            <person name="Yamamoto J."/>
            <person name="Kimura K."/>
            <person name="Nishikawa T."/>
            <person name="Andoh T."/>
            <person name="Iida Y."/>
            <person name="Ishikawa K."/>
            <person name="Ito E."/>
            <person name="Kagawa N."/>
            <person name="Kaminaga C."/>
            <person name="Kanehori K."/>
            <person name="Kawakami B."/>
            <person name="Kenmochi K."/>
            <person name="Kimura R."/>
            <person name="Kobayashi M."/>
            <person name="Kuroita T."/>
            <person name="Kuwayama H."/>
            <person name="Maruyama Y."/>
            <person name="Matsuo K."/>
            <person name="Minami K."/>
            <person name="Mitsubori M."/>
            <person name="Mori M."/>
            <person name="Morishita R."/>
            <person name="Murase A."/>
            <person name="Nishikawa A."/>
            <person name="Nishikawa S."/>
            <person name="Okamoto T."/>
            <person name="Sakagami N."/>
            <person name="Sakamoto Y."/>
            <person name="Sasaki Y."/>
            <person name="Seki T."/>
            <person name="Sono S."/>
            <person name="Sugiyama A."/>
            <person name="Sumiya T."/>
            <person name="Takayama T."/>
            <person name="Takayama Y."/>
            <person name="Takeda H."/>
            <person name="Togashi T."/>
            <person name="Yahata K."/>
            <person name="Yamada H."/>
            <person name="Yanagisawa Y."/>
            <person name="Endo Y."/>
            <person name="Imamoto F."/>
            <person name="Kisu Y."/>
            <person name="Tanaka S."/>
            <person name="Isogai T."/>
            <person name="Imai J."/>
            <person name="Watanabe S."/>
            <person name="Nomura N."/>
        </authorList>
    </citation>
    <scope>NUCLEOTIDE SEQUENCE [LARGE SCALE MRNA] (ISOFORM 1)</scope>
</reference>
<reference key="5">
    <citation type="journal article" date="1999" name="Nature">
        <title>The DNA sequence of human chromosome 22.</title>
        <authorList>
            <person name="Dunham I."/>
            <person name="Hunt A.R."/>
            <person name="Collins J.E."/>
            <person name="Bruskiewich R."/>
            <person name="Beare D.M."/>
            <person name="Clamp M."/>
            <person name="Smink L.J."/>
            <person name="Ainscough R."/>
            <person name="Almeida J.P."/>
            <person name="Babbage A.K."/>
            <person name="Bagguley C."/>
            <person name="Bailey J."/>
            <person name="Barlow K.F."/>
            <person name="Bates K.N."/>
            <person name="Beasley O.P."/>
            <person name="Bird C.P."/>
            <person name="Blakey S.E."/>
            <person name="Bridgeman A.M."/>
            <person name="Buck D."/>
            <person name="Burgess J."/>
            <person name="Burrill W.D."/>
            <person name="Burton J."/>
            <person name="Carder C."/>
            <person name="Carter N.P."/>
            <person name="Chen Y."/>
            <person name="Clark G."/>
            <person name="Clegg S.M."/>
            <person name="Cobley V.E."/>
            <person name="Cole C.G."/>
            <person name="Collier R.E."/>
            <person name="Connor R."/>
            <person name="Conroy D."/>
            <person name="Corby N.R."/>
            <person name="Coville G.J."/>
            <person name="Cox A.V."/>
            <person name="Davis J."/>
            <person name="Dawson E."/>
            <person name="Dhami P.D."/>
            <person name="Dockree C."/>
            <person name="Dodsworth S.J."/>
            <person name="Durbin R.M."/>
            <person name="Ellington A.G."/>
            <person name="Evans K.L."/>
            <person name="Fey J.M."/>
            <person name="Fleming K."/>
            <person name="French L."/>
            <person name="Garner A.A."/>
            <person name="Gilbert J.G.R."/>
            <person name="Goward M.E."/>
            <person name="Grafham D.V."/>
            <person name="Griffiths M.N.D."/>
            <person name="Hall C."/>
            <person name="Hall R.E."/>
            <person name="Hall-Tamlyn G."/>
            <person name="Heathcott R.W."/>
            <person name="Ho S."/>
            <person name="Holmes S."/>
            <person name="Hunt S.E."/>
            <person name="Jones M.C."/>
            <person name="Kershaw J."/>
            <person name="Kimberley A.M."/>
            <person name="King A."/>
            <person name="Laird G.K."/>
            <person name="Langford C.F."/>
            <person name="Leversha M.A."/>
            <person name="Lloyd C."/>
            <person name="Lloyd D.M."/>
            <person name="Martyn I.D."/>
            <person name="Mashreghi-Mohammadi M."/>
            <person name="Matthews L.H."/>
            <person name="Mccann O.T."/>
            <person name="Mcclay J."/>
            <person name="Mclaren S."/>
            <person name="McMurray A.A."/>
            <person name="Milne S.A."/>
            <person name="Mortimore B.J."/>
            <person name="Odell C.N."/>
            <person name="Pavitt R."/>
            <person name="Pearce A.V."/>
            <person name="Pearson D."/>
            <person name="Phillimore B.J.C.T."/>
            <person name="Phillips S.H."/>
            <person name="Plumb R.W."/>
            <person name="Ramsay H."/>
            <person name="Ramsey Y."/>
            <person name="Rogers L."/>
            <person name="Ross M.T."/>
            <person name="Scott C.E."/>
            <person name="Sehra H.K."/>
            <person name="Skuce C.D."/>
            <person name="Smalley S."/>
            <person name="Smith M.L."/>
            <person name="Soderlund C."/>
            <person name="Spragon L."/>
            <person name="Steward C.A."/>
            <person name="Sulston J.E."/>
            <person name="Swann R.M."/>
            <person name="Vaudin M."/>
            <person name="Wall M."/>
            <person name="Wallis J.M."/>
            <person name="Whiteley M.N."/>
            <person name="Willey D.L."/>
            <person name="Williams L."/>
            <person name="Williams S.A."/>
            <person name="Williamson H."/>
            <person name="Wilmer T.E."/>
            <person name="Wilming L."/>
            <person name="Wright C.L."/>
            <person name="Hubbard T."/>
            <person name="Bentley D.R."/>
            <person name="Beck S."/>
            <person name="Rogers J."/>
            <person name="Shimizu N."/>
            <person name="Minoshima S."/>
            <person name="Kawasaki K."/>
            <person name="Sasaki T."/>
            <person name="Asakawa S."/>
            <person name="Kudoh J."/>
            <person name="Shintani A."/>
            <person name="Shibuya K."/>
            <person name="Yoshizaki Y."/>
            <person name="Aoki N."/>
            <person name="Mitsuyama S."/>
            <person name="Roe B.A."/>
            <person name="Chen F."/>
            <person name="Chu L."/>
            <person name="Crabtree J."/>
            <person name="Deschamps S."/>
            <person name="Do A."/>
            <person name="Do T."/>
            <person name="Dorman A."/>
            <person name="Fang F."/>
            <person name="Fu Y."/>
            <person name="Hu P."/>
            <person name="Hua A."/>
            <person name="Kenton S."/>
            <person name="Lai H."/>
            <person name="Lao H.I."/>
            <person name="Lewis J."/>
            <person name="Lewis S."/>
            <person name="Lin S.-P."/>
            <person name="Loh P."/>
            <person name="Malaj E."/>
            <person name="Nguyen T."/>
            <person name="Pan H."/>
            <person name="Phan S."/>
            <person name="Qi S."/>
            <person name="Qian Y."/>
            <person name="Ray L."/>
            <person name="Ren Q."/>
            <person name="Shaull S."/>
            <person name="Sloan D."/>
            <person name="Song L."/>
            <person name="Wang Q."/>
            <person name="Wang Y."/>
            <person name="Wang Z."/>
            <person name="White J."/>
            <person name="Willingham D."/>
            <person name="Wu H."/>
            <person name="Yao Z."/>
            <person name="Zhan M."/>
            <person name="Zhang G."/>
            <person name="Chissoe S."/>
            <person name="Murray J."/>
            <person name="Miller N."/>
            <person name="Minx P."/>
            <person name="Fulton R."/>
            <person name="Johnson D."/>
            <person name="Bemis G."/>
            <person name="Bentley D."/>
            <person name="Bradshaw H."/>
            <person name="Bourne S."/>
            <person name="Cordes M."/>
            <person name="Du Z."/>
            <person name="Fulton L."/>
            <person name="Goela D."/>
            <person name="Graves T."/>
            <person name="Hawkins J."/>
            <person name="Hinds K."/>
            <person name="Kemp K."/>
            <person name="Latreille P."/>
            <person name="Layman D."/>
            <person name="Ozersky P."/>
            <person name="Rohlfing T."/>
            <person name="Scheet P."/>
            <person name="Walker C."/>
            <person name="Wamsley A."/>
            <person name="Wohldmann P."/>
            <person name="Pepin K."/>
            <person name="Nelson J."/>
            <person name="Korf I."/>
            <person name="Bedell J.A."/>
            <person name="Hillier L.W."/>
            <person name="Mardis E."/>
            <person name="Waterston R."/>
            <person name="Wilson R."/>
            <person name="Emanuel B.S."/>
            <person name="Shaikh T."/>
            <person name="Kurahashi H."/>
            <person name="Saitta S."/>
            <person name="Budarf M.L."/>
            <person name="McDermid H.E."/>
            <person name="Johnson A."/>
            <person name="Wong A.C.C."/>
            <person name="Morrow B.E."/>
            <person name="Edelmann L."/>
            <person name="Kim U.J."/>
            <person name="Shizuya H."/>
            <person name="Simon M.I."/>
            <person name="Dumanski J.P."/>
            <person name="Peyrard M."/>
            <person name="Kedra D."/>
            <person name="Seroussi E."/>
            <person name="Fransson I."/>
            <person name="Tapia I."/>
            <person name="Bruder C.E."/>
            <person name="O'Brien K.P."/>
            <person name="Wilkinson P."/>
            <person name="Bodenteich A."/>
            <person name="Hartman K."/>
            <person name="Hu X."/>
            <person name="Khan A.S."/>
            <person name="Lane L."/>
            <person name="Tilahun Y."/>
            <person name="Wright H."/>
        </authorList>
    </citation>
    <scope>NUCLEOTIDE SEQUENCE [LARGE SCALE GENOMIC DNA]</scope>
</reference>
<reference key="6">
    <citation type="submission" date="2005-07" db="EMBL/GenBank/DDBJ databases">
        <authorList>
            <person name="Mural R.J."/>
            <person name="Istrail S."/>
            <person name="Sutton G.G."/>
            <person name="Florea L."/>
            <person name="Halpern A.L."/>
            <person name="Mobarry C.M."/>
            <person name="Lippert R."/>
            <person name="Walenz B."/>
            <person name="Shatkay H."/>
            <person name="Dew I."/>
            <person name="Miller J.R."/>
            <person name="Flanigan M.J."/>
            <person name="Edwards N.J."/>
            <person name="Bolanos R."/>
            <person name="Fasulo D."/>
            <person name="Halldorsson B.V."/>
            <person name="Hannenhalli S."/>
            <person name="Turner R."/>
            <person name="Yooseph S."/>
            <person name="Lu F."/>
            <person name="Nusskern D.R."/>
            <person name="Shue B.C."/>
            <person name="Zheng X.H."/>
            <person name="Zhong F."/>
            <person name="Delcher A.L."/>
            <person name="Huson D.H."/>
            <person name="Kravitz S.A."/>
            <person name="Mouchard L."/>
            <person name="Reinert K."/>
            <person name="Remington K.A."/>
            <person name="Clark A.G."/>
            <person name="Waterman M.S."/>
            <person name="Eichler E.E."/>
            <person name="Adams M.D."/>
            <person name="Hunkapiller M.W."/>
            <person name="Myers E.W."/>
            <person name="Venter J.C."/>
        </authorList>
    </citation>
    <scope>NUCLEOTIDE SEQUENCE [LARGE SCALE GENOMIC DNA]</scope>
</reference>
<reference key="7">
    <citation type="journal article" date="2004" name="Genome Res.">
        <title>The status, quality, and expansion of the NIH full-length cDNA project: the Mammalian Gene Collection (MGC).</title>
        <authorList>
            <consortium name="The MGC Project Team"/>
        </authorList>
    </citation>
    <scope>NUCLEOTIDE SEQUENCE [LARGE SCALE MRNA] (ISOFORM 1)</scope>
    <source>
        <tissue>Lung</tissue>
    </source>
</reference>
<reference key="8">
    <citation type="journal article" date="1999" name="Proc. Natl. Acad. Sci. U.S.A.">
        <title>SMN mutants of spinal muscular atrophy patients are defective in binding to snRNP proteins.</title>
        <authorList>
            <person name="Pellizzoni L."/>
            <person name="Charroux B."/>
            <person name="Dreyfuss G."/>
        </authorList>
    </citation>
    <scope>INTERACTION WITH SMN1</scope>
</reference>
<reference key="9">
    <citation type="journal article" date="2001" name="Curr. Biol.">
        <title>Methylation of Sm proteins by a complex containing PRMT5 and the putative U snRNP assembly factor pICln.</title>
        <authorList>
            <person name="Meister G."/>
            <person name="Eggert C."/>
            <person name="Buehler D."/>
            <person name="Brahms H."/>
            <person name="Kambach C."/>
            <person name="Fischer U."/>
        </authorList>
    </citation>
    <scope>METHYLATION</scope>
</reference>
<reference key="10">
    <citation type="journal article" date="2001" name="Nat. Struct. Biol.">
        <title>SMN tudor domain structure and its interaction with the Sm proteins.</title>
        <authorList>
            <person name="Selenko P."/>
            <person name="Sprangers R."/>
            <person name="Stier G."/>
            <person name="Buhler D."/>
            <person name="Fischer U."/>
            <person name="Sattler M."/>
        </authorList>
    </citation>
    <scope>INTERACTION WITH SMN1</scope>
</reference>
<reference key="11">
    <citation type="journal article" date="2001" name="EMBO J.">
        <title>Purified U7 snRNPs lack the Sm proteins D1 and D2 but contain Lsm10, a new 14 kDa Sm D1-like protein.</title>
        <authorList>
            <person name="Pillai R.S."/>
            <person name="Will C.L."/>
            <person name="Luehrmann R."/>
            <person name="Schuemperli D."/>
            <person name="Mueller B."/>
        </authorList>
    </citation>
    <scope>IDENTIFICATION IN THE U7 SNRNP COMPLEX</scope>
    <scope>SUBUNIT</scope>
    <scope>SUBCELLULAR LOCATION</scope>
</reference>
<reference key="12">
    <citation type="journal article" date="2002" name="RNA">
        <title>Purification and characterization of native spliceosomes suitable for three-dimensional structural analysis.</title>
        <authorList>
            <person name="Jurica M.S."/>
            <person name="Licklider L.J."/>
            <person name="Gygi S.P."/>
            <person name="Grigorieff N."/>
            <person name="Moore M.J."/>
        </authorList>
    </citation>
    <scope>IDENTIFICATION BY MASS SPECTROMETRY</scope>
    <scope>IDENTIFICATION IN THE SPLICEOSOMAL C COMPLEX</scope>
    <scope>FUNCTION</scope>
    <scope>SUBCELLULAR LOCATION</scope>
    <scope>SUBUNIT</scope>
</reference>
<reference key="13">
    <citation type="journal article" date="2003" name="J. Mol. Biol.">
        <title>High-resolution X-ray and NMR structures of the SMN Tudor domain: conformational variation in the binding site for symmetrically dimethylated arginine residues.</title>
        <authorList>
            <person name="Sprangers R."/>
            <person name="Groves M.R."/>
            <person name="Sinning I."/>
            <person name="Sattler M."/>
        </authorList>
    </citation>
    <scope>INTERACTION WITH SMN1</scope>
</reference>
<reference key="14">
    <citation type="journal article" date="2003" name="Nature">
        <title>Proteomic characterization of the human centrosome by protein correlation profiling.</title>
        <authorList>
            <person name="Andersen J.S."/>
            <person name="Wilkinson C.J."/>
            <person name="Mayor T."/>
            <person name="Mortensen P."/>
            <person name="Nigg E.A."/>
            <person name="Mann M."/>
        </authorList>
    </citation>
    <scope>IDENTIFICATION BY MASS SPECTROMETRY</scope>
    <source>
        <tissue>Lymphoblast</tissue>
    </source>
</reference>
<reference key="15">
    <citation type="journal article" date="2004" name="RNA">
        <title>The human 18S U11/U12 snRNP contains a set of novel proteins not found in the U2-dependent spliceosome.</title>
        <authorList>
            <person name="Will C.L."/>
            <person name="Schneider C."/>
            <person name="Hossbach M."/>
            <person name="Urlaub H."/>
            <person name="Rauhut R."/>
            <person name="Elbashir S."/>
            <person name="Tuschl T."/>
            <person name="Luehrmann R."/>
        </authorList>
    </citation>
    <scope>IDENTIFICATION IN A COMPLEX WITH THE MINOR SPLICEOSOME</scope>
    <scope>IDENTIFICATION BY MASS SPECTROMETRY</scope>
    <scope>SUBUNIT</scope>
</reference>
<reference key="16">
    <citation type="journal article" date="2005" name="Mol. Cell. Biol.">
        <title>Specific sequence features, recognized by the SMN complex, identify snRNAs and determine their fate as snRNPs.</title>
        <authorList>
            <person name="Golembe T.J."/>
            <person name="Yong J."/>
            <person name="Dreyfuss G."/>
        </authorList>
    </citation>
    <scope>IDENTIFICATION IN THE SMN-SM COMPLEX</scope>
</reference>
<reference key="17">
    <citation type="journal article" date="2007" name="J. Cell Biol.">
        <title>Two distinct arginine methyltransferases are required for biogenesis of Sm-class ribonucleoproteins.</title>
        <authorList>
            <person name="Gonsalvez G.B."/>
            <person name="Tian L."/>
            <person name="Ospina J.K."/>
            <person name="Boisvert F.-M."/>
            <person name="Lamond A.I."/>
            <person name="Matera A.G."/>
        </authorList>
    </citation>
    <scope>METHYLATION</scope>
    <scope>INTERACTION WITH PRMT5 AND PRMT7</scope>
</reference>
<reference key="18">
    <citation type="journal article" date="2008" name="Cell">
        <title>An assembly chaperone collaborates with the SMN complex to generate spliceosomal SnRNPs.</title>
        <authorList>
            <person name="Chari A."/>
            <person name="Golas M.M."/>
            <person name="Klingenhager M."/>
            <person name="Neuenkirchen N."/>
            <person name="Sander B."/>
            <person name="Englbrecht C."/>
            <person name="Sickmann A."/>
            <person name="Stark H."/>
            <person name="Fischer U."/>
        </authorList>
    </citation>
    <scope>FUNCTION IN SNRNP BIOGENESIS</scope>
    <scope>IDENTIFICATION IN 6S PICLN-SM COMPLEX</scope>
    <scope>IDENTIFICATION IN SMN-SM COMPLEX</scope>
    <scope>SUBCELLULAR LOCATION</scope>
</reference>
<reference key="19">
    <citation type="journal article" date="2009" name="Anal. Chem.">
        <title>Lys-N and trypsin cover complementary parts of the phosphoproteome in a refined SCX-based approach.</title>
        <authorList>
            <person name="Gauci S."/>
            <person name="Helbig A.O."/>
            <person name="Slijper M."/>
            <person name="Krijgsveld J."/>
            <person name="Heck A.J."/>
            <person name="Mohammed S."/>
        </authorList>
    </citation>
    <scope>ACETYLATION [LARGE SCALE ANALYSIS] AT SER-2</scope>
    <scope>CLEAVAGE OF INITIATOR METHIONINE [LARGE SCALE ANALYSIS]</scope>
    <scope>IDENTIFICATION BY MASS SPECTROMETRY [LARGE SCALE ANALYSIS]</scope>
</reference>
<reference key="20">
    <citation type="journal article" date="2011" name="BMC Syst. Biol.">
        <title>Initial characterization of the human central proteome.</title>
        <authorList>
            <person name="Burkard T.R."/>
            <person name="Planyavsky M."/>
            <person name="Kaupe I."/>
            <person name="Breitwieser F.P."/>
            <person name="Buerckstuemmer T."/>
            <person name="Bennett K.L."/>
            <person name="Superti-Furga G."/>
            <person name="Colinge J."/>
        </authorList>
    </citation>
    <scope>IDENTIFICATION BY MASS SPECTROMETRY [LARGE SCALE ANALYSIS]</scope>
</reference>
<reference key="21">
    <citation type="journal article" date="2015" name="Proteomics">
        <title>N-terminome analysis of the human mitochondrial proteome.</title>
        <authorList>
            <person name="Vaca Jacome A.S."/>
            <person name="Rabilloud T."/>
            <person name="Schaeffer-Reiss C."/>
            <person name="Rompais M."/>
            <person name="Ayoub D."/>
            <person name="Lane L."/>
            <person name="Bairoch A."/>
            <person name="Van Dorsselaer A."/>
            <person name="Carapito C."/>
        </authorList>
    </citation>
    <scope>IDENTIFICATION BY MASS SPECTROMETRY [LARGE SCALE ANALYSIS]</scope>
</reference>
<reference key="22">
    <citation type="journal article" date="1999" name="Cell">
        <title>Crystal structures of two Sm protein complexes and their implications for the assembly of the spliceosomal snRNPs.</title>
        <authorList>
            <person name="Kambach C."/>
            <person name="Walke S."/>
            <person name="Young R."/>
            <person name="Avis J.M."/>
            <person name="de la Fortelle E."/>
            <person name="Raker V.A."/>
            <person name="Luehrmann R."/>
            <person name="Li J."/>
            <person name="Nagai K."/>
        </authorList>
    </citation>
    <scope>X-RAY CRYSTALLOGRAPHY (2.0 ANGSTROMS) OF 4-75 IN COMPLEX WITH SNRPB</scope>
</reference>
<reference key="23">
    <citation type="journal article" date="2009" name="Nature">
        <title>Crystal structure of human spliceosomal U1 snRNP at 5.5 A resolution.</title>
        <authorList>
            <person name="Pomeranz Krummel D.A."/>
            <person name="Oubridge C."/>
            <person name="Leung A.K."/>
            <person name="Li J."/>
            <person name="Nagai K."/>
        </authorList>
    </citation>
    <scope>X-RAY CRYSTALLOGRAPHY (5.49 ANGSTROMS) IN SPLICEOSOMAL U1 SNRNP</scope>
    <scope>FUNCTION</scope>
    <scope>SUBUNIT</scope>
</reference>
<reference key="24">
    <citation type="journal article" date="2011" name="Nature">
        <title>Structure of the spliceosomal U4 snRNP core domain and its implication for snRNP biogenesis.</title>
        <authorList>
            <person name="Leung A.K."/>
            <person name="Nagai K."/>
            <person name="Li J."/>
        </authorList>
    </citation>
    <scope>X-RAY CRYSTALLOGRAPHY (3.60 ANGSTROMS) IN SPLICEOSOMAL CORE U4 SNRNP</scope>
    <scope>SUBUNIT</scope>
</reference>
<reference evidence="27" key="25">
    <citation type="journal article" date="2015" name="Elife">
        <title>Crystal structure of human U1 snRNP, a small nuclear ribonucleoprotein particle, reveals the mechanism of 5' splice site recognition.</title>
        <authorList>
            <person name="Kondo Y."/>
            <person name="Oubridge C."/>
            <person name="van Roon A.M."/>
            <person name="Nagai K."/>
        </authorList>
    </citation>
    <scope>X-RAY CRYSTALLOGRAPHY (3.30 ANGSTROMS)</scope>
    <scope>SUBUNIT</scope>
</reference>
<reference evidence="26" key="26">
    <citation type="journal article" date="2016" name="Science">
        <title>Molecular architecture of the human U4/U6.U5 tri-snRNP.</title>
        <authorList>
            <person name="Agafonov D.E."/>
            <person name="Kastner B."/>
            <person name="Dybkov O."/>
            <person name="Hofele R.V."/>
            <person name="Liu W.T."/>
            <person name="Urlaub H."/>
            <person name="Luhrmann R."/>
            <person name="Stark H."/>
        </authorList>
    </citation>
    <scope>STRUCTURE BY ELECTRON MICROSCOPY (7.00 ANGSTROMS)</scope>
    <scope>SUBCELLULAR LOCATION</scope>
    <scope>SUBUNIT</scope>
    <scope>IDENTIFICATION BY MASS SPECTROMETRY</scope>
</reference>
<reference evidence="30" key="27">
    <citation type="journal article" date="2017" name="Cell">
        <title>An Atomic Structure of the Human Spliceosome.</title>
        <authorList>
            <person name="Zhang X."/>
            <person name="Yan C."/>
            <person name="Hang J."/>
            <person name="Finci L.I."/>
            <person name="Lei J."/>
            <person name="Shi Y."/>
        </authorList>
    </citation>
    <scope>STRUCTURE BY ELECTRON MICROSCOPY (3.60 ANGSTROMS)</scope>
    <scope>FUNCTION</scope>
    <scope>SUBCELLULAR LOCATION</scope>
    <scope>SUBUNIT</scope>
</reference>
<reference evidence="29" key="28">
    <citation type="journal article" date="2017" name="Cell">
        <title>Cryo-EM Structure of a Pre-catalytic Human Spliceosome Primed for Activation.</title>
        <authorList>
            <person name="Bertram K."/>
            <person name="Agafonov D.E."/>
            <person name="Dybkov O."/>
            <person name="Haselbach D."/>
            <person name="Leelaram M.N."/>
            <person name="Will C.L."/>
            <person name="Urlaub H."/>
            <person name="Kastner B."/>
            <person name="Luhrmann R."/>
            <person name="Stark H."/>
        </authorList>
    </citation>
    <scope>STRUCTURE BY ELECTRON MICROSCOPY (4.50 ANGSTROMS)</scope>
    <scope>FUNCTION</scope>
    <scope>SUBCELLULAR LOCATION</scope>
    <scope>SUBUNIT</scope>
    <scope>IDENTIFICATION BY MASS SPECTROMETRY</scope>
</reference>
<reference evidence="28" key="29">
    <citation type="journal article" date="2017" name="Nature">
        <title>Cryo-EM structure of a human spliceosome activated for step 2 of splicing.</title>
        <authorList>
            <person name="Bertram K."/>
            <person name="Agafonov D.E."/>
            <person name="Liu W.T."/>
            <person name="Dybkov O."/>
            <person name="Will C.L."/>
            <person name="Hartmuth K."/>
            <person name="Urlaub H."/>
            <person name="Kastner B."/>
            <person name="Stark H."/>
            <person name="Luhrmann R."/>
        </authorList>
    </citation>
    <scope>STRUCTURE BY ELECTRON MICROSCOPY (5.90 ANGSTROMS)</scope>
    <scope>FUNCTION</scope>
    <scope>SUBCELLULAR LOCATION</scope>
    <scope>SUBUNIT</scope>
    <scope>IDENTIFICATION BY MASS SPECTROMETRY</scope>
</reference>
<reference evidence="31" key="30">
    <citation type="journal article" date="2020" name="Nature">
        <title>Molecular architecture of the human 17S U2 snRNP.</title>
        <authorList>
            <person name="Zhang Z."/>
            <person name="Will C.L."/>
            <person name="Bertram K."/>
            <person name="Dybkov O."/>
            <person name="Hartmuth K."/>
            <person name="Agafonov D.E."/>
            <person name="Hofele R."/>
            <person name="Urlaub H."/>
            <person name="Kastner B."/>
            <person name="Luehrmann R."/>
            <person name="Stark H."/>
        </authorList>
    </citation>
    <scope>STRUCTURE BY ELECTRON MICROSCOPY (4.10 ANGSTROMS) IN COMPLEX WITH THE 17S U2 SNRNP COMPLEX</scope>
    <scope>FUNCTION</scope>
    <scope>IDENTIFICATION IN THE 17S U2 SNRNP COMPLEX</scope>
</reference>
<reference evidence="32" key="31">
    <citation type="journal article" date="2021" name="Science">
        <title>Structure of the activated human minor spliceosome.</title>
        <authorList>
            <person name="Bai R."/>
            <person name="Wan R."/>
            <person name="Wang L."/>
            <person name="Xu K."/>
            <person name="Zhang Q."/>
            <person name="Lei J."/>
            <person name="Shi Y."/>
        </authorList>
    </citation>
    <scope>STRUCTURE BY ELECTRON MICROSCOPY (2.89 ANGSTROMS)</scope>
    <scope>FUNCTION</scope>
    <scope>SUBUNIT</scope>
</reference>
<reference evidence="33" key="32">
    <citation type="journal article" date="2023" name="Nat. Commun.">
        <title>Mechanisms of the RNA helicases DDX42 and DDX46 in human U2 snRNP assembly.</title>
        <authorList>
            <person name="Yang F."/>
            <person name="Bian T."/>
            <person name="Zhan X."/>
            <person name="Chen Z."/>
            <person name="Xing Z."/>
            <person name="Larsen N.A."/>
            <person name="Zhang X."/>
            <person name="Shi Y."/>
        </authorList>
    </citation>
    <scope>STRUCTURE BY ELECTRON MICROSCOPY (2.70 ANGSTROMS) IN COMPLEX WITH THE 17S U2 SNRNP COMPLEX</scope>
    <scope>IDENTIFICATION IN THE 17S U2 SNRNP COMPLEX</scope>
</reference>
<name>SMD3_HUMAN</name>
<accession>P62318</accession>
<accession>B4DJP7</accession>
<accession>B5BU13</accession>
<accession>P43331</accession>
<organism>
    <name type="scientific">Homo sapiens</name>
    <name type="common">Human</name>
    <dbReference type="NCBI Taxonomy" id="9606"/>
    <lineage>
        <taxon>Eukaryota</taxon>
        <taxon>Metazoa</taxon>
        <taxon>Chordata</taxon>
        <taxon>Craniata</taxon>
        <taxon>Vertebrata</taxon>
        <taxon>Euteleostomi</taxon>
        <taxon>Mammalia</taxon>
        <taxon>Eutheria</taxon>
        <taxon>Euarchontoglires</taxon>
        <taxon>Primates</taxon>
        <taxon>Haplorrhini</taxon>
        <taxon>Catarrhini</taxon>
        <taxon>Hominidae</taxon>
        <taxon>Homo</taxon>
    </lineage>
</organism>
<dbReference type="EMBL" id="U15009">
    <property type="protein sequence ID" value="AAA57034.1"/>
    <property type="molecule type" value="mRNA"/>
</dbReference>
<dbReference type="EMBL" id="CR456583">
    <property type="protein sequence ID" value="CAG30469.1"/>
    <property type="molecule type" value="mRNA"/>
</dbReference>
<dbReference type="EMBL" id="AK296173">
    <property type="protein sequence ID" value="BAG58909.1"/>
    <property type="molecule type" value="mRNA"/>
</dbReference>
<dbReference type="EMBL" id="AB451249">
    <property type="protein sequence ID" value="BAG70063.1"/>
    <property type="molecule type" value="mRNA"/>
</dbReference>
<dbReference type="EMBL" id="AB451373">
    <property type="protein sequence ID" value="BAG70187.1"/>
    <property type="molecule type" value="mRNA"/>
</dbReference>
<dbReference type="EMBL" id="AP000356">
    <property type="status" value="NOT_ANNOTATED_CDS"/>
    <property type="molecule type" value="Genomic_DNA"/>
</dbReference>
<dbReference type="EMBL" id="CH471095">
    <property type="protein sequence ID" value="EAW59670.1"/>
    <property type="molecule type" value="Genomic_DNA"/>
</dbReference>
<dbReference type="EMBL" id="BC000457">
    <property type="protein sequence ID" value="AAH00457.1"/>
    <property type="molecule type" value="mRNA"/>
</dbReference>
<dbReference type="EMBL" id="BC003150">
    <property type="protein sequence ID" value="AAH03150.1"/>
    <property type="molecule type" value="mRNA"/>
</dbReference>
<dbReference type="CCDS" id="CCDS13828.1">
    <molecule id="P62318-1"/>
</dbReference>
<dbReference type="RefSeq" id="NP_001265585.1">
    <molecule id="P62318-1"/>
    <property type="nucleotide sequence ID" value="NM_001278656.2"/>
</dbReference>
<dbReference type="RefSeq" id="NP_004166.1">
    <molecule id="P62318-1"/>
    <property type="nucleotide sequence ID" value="NM_004175.5"/>
</dbReference>
<dbReference type="PDB" id="1D3B">
    <property type="method" value="X-ray"/>
    <property type="resolution" value="2.00 A"/>
    <property type="chains" value="A/C/E/G/I/K=1-75"/>
</dbReference>
<dbReference type="PDB" id="3CW1">
    <property type="method" value="X-ray"/>
    <property type="resolution" value="5.49 A"/>
    <property type="chains" value="D/S/T/U=1-126"/>
</dbReference>
<dbReference type="PDB" id="3JCR">
    <property type="method" value="EM"/>
    <property type="resolution" value="7.00 A"/>
    <property type="chains" value="R/r=1-126"/>
</dbReference>
<dbReference type="PDB" id="3PGW">
    <property type="method" value="X-ray"/>
    <property type="resolution" value="4.40 A"/>
    <property type="chains" value="W/Z=1-126"/>
</dbReference>
<dbReference type="PDB" id="3VRI">
    <property type="method" value="X-ray"/>
    <property type="resolution" value="1.60 A"/>
    <property type="chains" value="C=54-63"/>
</dbReference>
<dbReference type="PDB" id="4PJO">
    <property type="method" value="X-ray"/>
    <property type="resolution" value="3.30 A"/>
    <property type="chains" value="A/O/a/o=1-126"/>
</dbReference>
<dbReference type="PDB" id="4WZJ">
    <property type="method" value="X-ray"/>
    <property type="resolution" value="3.60 A"/>
    <property type="chains" value="AD/AK/AR/BD/BK/BR/CD/CK/CR/DD/DK/DR=1-126"/>
</dbReference>
<dbReference type="PDB" id="5MQF">
    <property type="method" value="EM"/>
    <property type="resolution" value="5.90 A"/>
    <property type="chains" value="e/l=1-126"/>
</dbReference>
<dbReference type="PDB" id="5O9Z">
    <property type="method" value="EM"/>
    <property type="resolution" value="4.50 A"/>
    <property type="chains" value="W/e/l=1-126"/>
</dbReference>
<dbReference type="PDB" id="5XJC">
    <property type="method" value="EM"/>
    <property type="resolution" value="3.60 A"/>
    <property type="chains" value="a/h=1-126"/>
</dbReference>
<dbReference type="PDB" id="5YZG">
    <property type="method" value="EM"/>
    <property type="resolution" value="4.10 A"/>
    <property type="chains" value="a/h=1-126"/>
</dbReference>
<dbReference type="PDB" id="5Z56">
    <property type="method" value="EM"/>
    <property type="resolution" value="5.10 A"/>
    <property type="chains" value="a/h=1-126"/>
</dbReference>
<dbReference type="PDB" id="5Z57">
    <property type="method" value="EM"/>
    <property type="resolution" value="6.50 A"/>
    <property type="chains" value="a/h=1-126"/>
</dbReference>
<dbReference type="PDB" id="5Z58">
    <property type="method" value="EM"/>
    <property type="resolution" value="4.90 A"/>
    <property type="chains" value="a/h=1-126"/>
</dbReference>
<dbReference type="PDB" id="6AH0">
    <property type="method" value="EM"/>
    <property type="resolution" value="5.70 A"/>
    <property type="chains" value="T/e/h=1-126"/>
</dbReference>
<dbReference type="PDB" id="6AHD">
    <property type="method" value="EM"/>
    <property type="resolution" value="3.80 A"/>
    <property type="chains" value="T/g/h=1-126"/>
</dbReference>
<dbReference type="PDB" id="6FF7">
    <property type="method" value="EM"/>
    <property type="resolution" value="4.50 A"/>
    <property type="chains" value="e/l=1-126"/>
</dbReference>
<dbReference type="PDB" id="6ICZ">
    <property type="method" value="EM"/>
    <property type="resolution" value="3.00 A"/>
    <property type="chains" value="a/h=1-126"/>
</dbReference>
<dbReference type="PDB" id="6ID0">
    <property type="method" value="EM"/>
    <property type="resolution" value="2.90 A"/>
    <property type="chains" value="a/h=1-126"/>
</dbReference>
<dbReference type="PDB" id="6ID1">
    <property type="method" value="EM"/>
    <property type="resolution" value="2.86 A"/>
    <property type="chains" value="a/h=1-126"/>
</dbReference>
<dbReference type="PDB" id="6QDV">
    <property type="method" value="EM"/>
    <property type="resolution" value="3.30 A"/>
    <property type="chains" value="d/n=2-85"/>
</dbReference>
<dbReference type="PDB" id="6QW6">
    <property type="method" value="EM"/>
    <property type="resolution" value="2.92 A"/>
    <property type="chains" value="43/53=1-126"/>
</dbReference>
<dbReference type="PDB" id="6QX9">
    <property type="method" value="EM"/>
    <property type="resolution" value="3.28 A"/>
    <property type="chains" value="13/23/43/53=1-126"/>
</dbReference>
<dbReference type="PDB" id="6V4X">
    <property type="method" value="EM"/>
    <property type="resolution" value="3.20 A"/>
    <property type="chains" value="A=1-126"/>
</dbReference>
<dbReference type="PDB" id="6Y53">
    <property type="method" value="EM"/>
    <property type="resolution" value="7.10 A"/>
    <property type="chains" value="l=1-126"/>
</dbReference>
<dbReference type="PDB" id="6Y5Q">
    <property type="method" value="EM"/>
    <property type="resolution" value="7.10 A"/>
    <property type="chains" value="l=1-126"/>
</dbReference>
<dbReference type="PDB" id="7A5P">
    <property type="method" value="EM"/>
    <property type="resolution" value="5.00 A"/>
    <property type="chains" value="a/l=1-126"/>
</dbReference>
<dbReference type="PDB" id="7ABG">
    <property type="method" value="EM"/>
    <property type="resolution" value="7.80 A"/>
    <property type="chains" value="e/l=1-126"/>
</dbReference>
<dbReference type="PDB" id="7ABI">
    <property type="method" value="EM"/>
    <property type="resolution" value="8.00 A"/>
    <property type="chains" value="e/l=1-126"/>
</dbReference>
<dbReference type="PDB" id="7B0Y">
    <property type="method" value="EM"/>
    <property type="resolution" value="3.60 A"/>
    <property type="chains" value="i=1-126"/>
</dbReference>
<dbReference type="PDB" id="7DVQ">
    <property type="method" value="EM"/>
    <property type="resolution" value="2.89 A"/>
    <property type="chains" value="a/h=1-126"/>
</dbReference>
<dbReference type="PDB" id="7EVO">
    <property type="method" value="EM"/>
    <property type="resolution" value="2.50 A"/>
    <property type="chains" value="e=1-126"/>
</dbReference>
<dbReference type="PDB" id="7QTT">
    <property type="method" value="EM"/>
    <property type="resolution" value="3.10 A"/>
    <property type="chains" value="j=1-126"/>
</dbReference>
<dbReference type="PDB" id="7VPX">
    <property type="method" value="EM"/>
    <property type="resolution" value="3.00 A"/>
    <property type="chains" value="e/j=1-126"/>
</dbReference>
<dbReference type="PDB" id="7W59">
    <property type="method" value="EM"/>
    <property type="resolution" value="3.60 A"/>
    <property type="chains" value="a/h=1-126"/>
</dbReference>
<dbReference type="PDB" id="7W5A">
    <property type="method" value="EM"/>
    <property type="resolution" value="3.60 A"/>
    <property type="chains" value="a/h=1-126"/>
</dbReference>
<dbReference type="PDB" id="7W5B">
    <property type="method" value="EM"/>
    <property type="resolution" value="4.30 A"/>
    <property type="chains" value="a/h=1-126"/>
</dbReference>
<dbReference type="PDB" id="8C6J">
    <property type="method" value="EM"/>
    <property type="resolution" value="2.80 A"/>
    <property type="chains" value="d/n=1-126"/>
</dbReference>
<dbReference type="PDB" id="8CH6">
    <property type="method" value="EM"/>
    <property type="resolution" value="5.90 A"/>
    <property type="chains" value="3/j=1-126"/>
</dbReference>
<dbReference type="PDB" id="8H6E">
    <property type="method" value="EM"/>
    <property type="resolution" value="3.20 A"/>
    <property type="chains" value="2g/4g/5g=1-126"/>
</dbReference>
<dbReference type="PDB" id="8H6J">
    <property type="method" value="EM"/>
    <property type="resolution" value="3.25 A"/>
    <property type="chains" value="2g/4g/5g=1-126"/>
</dbReference>
<dbReference type="PDB" id="8H6K">
    <property type="method" value="EM"/>
    <property type="resolution" value="2.70 A"/>
    <property type="chains" value="2g/4g/5g=1-126"/>
</dbReference>
<dbReference type="PDB" id="8H6L">
    <property type="method" value="EM"/>
    <property type="resolution" value="2.60 A"/>
    <property type="chains" value="2g/4g/5g=1-126"/>
</dbReference>
<dbReference type="PDB" id="8HK1">
    <property type="method" value="EM"/>
    <property type="resolution" value="2.70 A"/>
    <property type="chains" value="e=1-126"/>
</dbReference>
<dbReference type="PDB" id="8I0P">
    <property type="method" value="EM"/>
    <property type="resolution" value="3.40 A"/>
    <property type="chains" value="g/l=1-126"/>
</dbReference>
<dbReference type="PDB" id="8I0R">
    <property type="method" value="EM"/>
    <property type="resolution" value="3.00 A"/>
    <property type="chains" value="g/l=1-126"/>
</dbReference>
<dbReference type="PDB" id="8I0S">
    <property type="method" value="EM"/>
    <property type="resolution" value="4.20 A"/>
    <property type="chains" value="g/l=1-126"/>
</dbReference>
<dbReference type="PDB" id="8I0T">
    <property type="method" value="EM"/>
    <property type="resolution" value="3.00 A"/>
    <property type="chains" value="g/l=1-126"/>
</dbReference>
<dbReference type="PDB" id="8I0U">
    <property type="method" value="EM"/>
    <property type="resolution" value="3.30 A"/>
    <property type="chains" value="g/l=1-126"/>
</dbReference>
<dbReference type="PDB" id="8I0V">
    <property type="method" value="EM"/>
    <property type="resolution" value="3.00 A"/>
    <property type="chains" value="g/l=1-126"/>
</dbReference>
<dbReference type="PDB" id="8I0W">
    <property type="method" value="EM"/>
    <property type="resolution" value="3.40 A"/>
    <property type="chains" value="g/h=1-126"/>
</dbReference>
<dbReference type="PDB" id="8Q7Q">
    <property type="method" value="EM"/>
    <property type="resolution" value="3.20 A"/>
    <property type="chains" value="d=1-126"/>
</dbReference>
<dbReference type="PDB" id="8Q7V">
    <property type="method" value="EM"/>
    <property type="resolution" value="3.80 A"/>
    <property type="chains" value="d=1-126"/>
</dbReference>
<dbReference type="PDB" id="8Q7W">
    <property type="method" value="EM"/>
    <property type="resolution" value="3.90 A"/>
    <property type="chains" value="d=1-126"/>
</dbReference>
<dbReference type="PDB" id="8Q7X">
    <property type="method" value="EM"/>
    <property type="resolution" value="4.60 A"/>
    <property type="chains" value="d=1-126"/>
</dbReference>
<dbReference type="PDB" id="8Q91">
    <property type="method" value="EM"/>
    <property type="resolution" value="3.10 A"/>
    <property type="chains" value="k=1-126"/>
</dbReference>
<dbReference type="PDB" id="8QO9">
    <property type="method" value="EM"/>
    <property type="resolution" value="5.29 A"/>
    <property type="chains" value="23/43/53=1-126"/>
</dbReference>
<dbReference type="PDB" id="8QXD">
    <property type="method" value="EM"/>
    <property type="resolution" value="9.60 A"/>
    <property type="chains" value="23/43/53=1-126"/>
</dbReference>
<dbReference type="PDB" id="8QZS">
    <property type="method" value="EM"/>
    <property type="resolution" value="4.10 A"/>
    <property type="chains" value="23/43/53=1-126"/>
</dbReference>
<dbReference type="PDB" id="8R08">
    <property type="method" value="EM"/>
    <property type="resolution" value="6.10 A"/>
    <property type="chains" value="13/23/43/53=1-126"/>
</dbReference>
<dbReference type="PDB" id="8R09">
    <property type="method" value="EM"/>
    <property type="resolution" value="4.30 A"/>
    <property type="chains" value="23/43/53=1-126"/>
</dbReference>
<dbReference type="PDB" id="8R0A">
    <property type="method" value="EM"/>
    <property type="resolution" value="5.80 A"/>
    <property type="chains" value="23/43/53=1-126"/>
</dbReference>
<dbReference type="PDB" id="8R0B">
    <property type="method" value="EM"/>
    <property type="resolution" value="4.40 A"/>
    <property type="chains" value="23/43/53=1-126"/>
</dbReference>
<dbReference type="PDB" id="8R7N">
    <property type="method" value="EM"/>
    <property type="resolution" value="3.40 A"/>
    <property type="chains" value="j=1-126"/>
</dbReference>
<dbReference type="PDB" id="8RC0">
    <property type="method" value="EM"/>
    <property type="resolution" value="3.20 A"/>
    <property type="chains" value="k=1-126"/>
</dbReference>
<dbReference type="PDB" id="8RM5">
    <property type="method" value="EM"/>
    <property type="resolution" value="6.90 A"/>
    <property type="chains" value="23/43/53=1-126"/>
</dbReference>
<dbReference type="PDB" id="8RO2">
    <property type="method" value="EM"/>
    <property type="resolution" value="3.50 A"/>
    <property type="chains" value="a=1-126"/>
</dbReference>
<dbReference type="PDB" id="8Y6O">
    <property type="method" value="EM"/>
    <property type="resolution" value="3.38 A"/>
    <property type="chains" value="d/k/r=1-126"/>
</dbReference>
<dbReference type="PDB" id="8Y7E">
    <property type="method" value="EM"/>
    <property type="resolution" value="4.66 A"/>
    <property type="chains" value="h=1-126"/>
</dbReference>
<dbReference type="PDB" id="9FMD">
    <property type="method" value="EM"/>
    <property type="resolution" value="3.30 A"/>
    <property type="chains" value="a/h=1-126"/>
</dbReference>
<dbReference type="PDB" id="9GBW">
    <property type="method" value="EM"/>
    <property type="resolution" value="3.50 A"/>
    <property type="chains" value="j=1-126"/>
</dbReference>
<dbReference type="PDB" id="9GC0">
    <property type="method" value="EM"/>
    <property type="resolution" value="3.20 A"/>
    <property type="chains" value="j=1-126"/>
</dbReference>
<dbReference type="PDB" id="9GCL">
    <property type="method" value="EM"/>
    <property type="resolution" value="3.00 A"/>
    <property type="chains" value="j=1-126"/>
</dbReference>
<dbReference type="PDBsum" id="1D3B"/>
<dbReference type="PDBsum" id="3CW1"/>
<dbReference type="PDBsum" id="3JCR"/>
<dbReference type="PDBsum" id="3PGW"/>
<dbReference type="PDBsum" id="3VRI"/>
<dbReference type="PDBsum" id="4PJO"/>
<dbReference type="PDBsum" id="4WZJ"/>
<dbReference type="PDBsum" id="5MQF"/>
<dbReference type="PDBsum" id="5O9Z"/>
<dbReference type="PDBsum" id="5XJC"/>
<dbReference type="PDBsum" id="5YZG"/>
<dbReference type="PDBsum" id="5Z56"/>
<dbReference type="PDBsum" id="5Z57"/>
<dbReference type="PDBsum" id="5Z58"/>
<dbReference type="PDBsum" id="6AH0"/>
<dbReference type="PDBsum" id="6AHD"/>
<dbReference type="PDBsum" id="6FF7"/>
<dbReference type="PDBsum" id="6ICZ"/>
<dbReference type="PDBsum" id="6ID0"/>
<dbReference type="PDBsum" id="6ID1"/>
<dbReference type="PDBsum" id="6QDV"/>
<dbReference type="PDBsum" id="6QW6"/>
<dbReference type="PDBsum" id="6QX9"/>
<dbReference type="PDBsum" id="6V4X"/>
<dbReference type="PDBsum" id="6Y53"/>
<dbReference type="PDBsum" id="6Y5Q"/>
<dbReference type="PDBsum" id="7A5P"/>
<dbReference type="PDBsum" id="7ABG"/>
<dbReference type="PDBsum" id="7ABI"/>
<dbReference type="PDBsum" id="7B0Y"/>
<dbReference type="PDBsum" id="7DVQ"/>
<dbReference type="PDBsum" id="7EVO"/>
<dbReference type="PDBsum" id="7QTT"/>
<dbReference type="PDBsum" id="7VPX"/>
<dbReference type="PDBsum" id="7W59"/>
<dbReference type="PDBsum" id="7W5A"/>
<dbReference type="PDBsum" id="7W5B"/>
<dbReference type="PDBsum" id="8C6J"/>
<dbReference type="PDBsum" id="8CH6"/>
<dbReference type="PDBsum" id="8H6E"/>
<dbReference type="PDBsum" id="8H6J"/>
<dbReference type="PDBsum" id="8H6K"/>
<dbReference type="PDBsum" id="8H6L"/>
<dbReference type="PDBsum" id="8HK1"/>
<dbReference type="PDBsum" id="8I0P"/>
<dbReference type="PDBsum" id="8I0R"/>
<dbReference type="PDBsum" id="8I0S"/>
<dbReference type="PDBsum" id="8I0T"/>
<dbReference type="PDBsum" id="8I0U"/>
<dbReference type="PDBsum" id="8I0V"/>
<dbReference type="PDBsum" id="8I0W"/>
<dbReference type="PDBsum" id="8Q7Q"/>
<dbReference type="PDBsum" id="8Q7V"/>
<dbReference type="PDBsum" id="8Q7W"/>
<dbReference type="PDBsum" id="8Q7X"/>
<dbReference type="PDBsum" id="8Q91"/>
<dbReference type="PDBsum" id="8QO9"/>
<dbReference type="PDBsum" id="8QXD"/>
<dbReference type="PDBsum" id="8QZS"/>
<dbReference type="PDBsum" id="8R08"/>
<dbReference type="PDBsum" id="8R09"/>
<dbReference type="PDBsum" id="8R0A"/>
<dbReference type="PDBsum" id="8R0B"/>
<dbReference type="PDBsum" id="8R7N"/>
<dbReference type="PDBsum" id="8RC0"/>
<dbReference type="PDBsum" id="8RM5"/>
<dbReference type="PDBsum" id="8RO2"/>
<dbReference type="PDBsum" id="8Y6O"/>
<dbReference type="PDBsum" id="8Y7E"/>
<dbReference type="PDBsum" id="9FMD"/>
<dbReference type="PDBsum" id="9GBW"/>
<dbReference type="PDBsum" id="9GC0"/>
<dbReference type="PDBsum" id="9GCL"/>
<dbReference type="EMDB" id="EMD-10689"/>
<dbReference type="EMDB" id="EMD-11695"/>
<dbReference type="EMDB" id="EMD-11697"/>
<dbReference type="EMDB" id="EMD-11972"/>
<dbReference type="EMDB" id="EMD-14146"/>
<dbReference type="EMDB" id="EMD-16452"/>
<dbReference type="EMDB" id="EMD-16658"/>
<dbReference type="EMDB" id="EMD-18229"/>
<dbReference type="EMDB" id="EMD-18234"/>
<dbReference type="EMDB" id="EMD-18235"/>
<dbReference type="EMDB" id="EMD-18237"/>
<dbReference type="EMDB" id="EMD-18267"/>
<dbReference type="EMDB" id="EMD-18529"/>
<dbReference type="EMDB" id="EMD-18718"/>
<dbReference type="EMDB" id="EMD-18781"/>
<dbReference type="EMDB" id="EMD-18786"/>
<dbReference type="EMDB" id="EMD-18787"/>
<dbReference type="EMDB" id="EMD-18788"/>
<dbReference type="EMDB" id="EMD-18789"/>
<dbReference type="EMDB" id="EMD-18984"/>
<dbReference type="EMDB" id="EMD-19041"/>
<dbReference type="EMDB" id="EMD-19349"/>
<dbReference type="EMDB" id="EMD-19399"/>
<dbReference type="EMDB" id="EMD-21050"/>
<dbReference type="EMDB" id="EMD-30875"/>
<dbReference type="EMDB" id="EMD-31334"/>
<dbReference type="EMDB" id="EMD-32074"/>
<dbReference type="EMDB" id="EMD-32317"/>
<dbReference type="EMDB" id="EMD-32319"/>
<dbReference type="EMDB" id="EMD-32321"/>
<dbReference type="EMDB" id="EMD-34500"/>
<dbReference type="EMDB" id="EMD-34505"/>
<dbReference type="EMDB" id="EMD-34507"/>
<dbReference type="EMDB" id="EMD-34508"/>
<dbReference type="EMDB" id="EMD-34841"/>
<dbReference type="EMDB" id="EMD-35105"/>
<dbReference type="EMDB" id="EMD-35107"/>
<dbReference type="EMDB" id="EMD-35108"/>
<dbReference type="EMDB" id="EMD-35109"/>
<dbReference type="EMDB" id="EMD-35110"/>
<dbReference type="EMDB" id="EMD-35111"/>
<dbReference type="EMDB" id="EMD-35113"/>
<dbReference type="EMDB" id="EMD-3545"/>
<dbReference type="EMDB" id="EMD-3766"/>
<dbReference type="EMDB" id="EMD-38993"/>
<dbReference type="EMDB" id="EMD-39013"/>
<dbReference type="EMDB" id="EMD-4525"/>
<dbReference type="EMDB" id="EMD-4658"/>
<dbReference type="EMDB" id="EMD-4665"/>
<dbReference type="EMDB" id="EMD-51223"/>
<dbReference type="EMDB" id="EMD-51226"/>
<dbReference type="EMDB" id="EMD-51233"/>
<dbReference type="EMDB" id="EMD-6721"/>
<dbReference type="EMDB" id="EMD-6864"/>
<dbReference type="EMDB" id="EMD-6889"/>
<dbReference type="EMDB" id="EMD-6890"/>
<dbReference type="EMDB" id="EMD-6891"/>
<dbReference type="EMDB" id="EMD-9621"/>
<dbReference type="EMDB" id="EMD-9624"/>
<dbReference type="EMDB" id="EMD-9645"/>
<dbReference type="EMDB" id="EMD-9646"/>
<dbReference type="EMDB" id="EMD-9647"/>
<dbReference type="SMR" id="P62318"/>
<dbReference type="BioGRID" id="112518">
    <property type="interactions" value="440"/>
</dbReference>
<dbReference type="ComplexPortal" id="CPX-2391">
    <property type="entry name" value="U4/U6.U5 small nuclear ribonucleoprotein complex"/>
</dbReference>
<dbReference type="ComplexPortal" id="CPX-2392">
    <property type="entry name" value="U1 small nuclear ribonucleoprotein complex"/>
</dbReference>
<dbReference type="ComplexPortal" id="CPX-2539">
    <property type="entry name" value="U2 small nuclear ribonucleoprotein complex"/>
</dbReference>
<dbReference type="ComplexPortal" id="CPX-2705">
    <property type="entry name" value="U7 small nuclear ribonucleoprotein complex"/>
</dbReference>
<dbReference type="ComplexPortal" id="CPX-6033">
    <property type="entry name" value="Sm complex"/>
</dbReference>
<dbReference type="CORUM" id="P62318"/>
<dbReference type="DIP" id="DIP-31216N"/>
<dbReference type="FunCoup" id="P62318">
    <property type="interactions" value="2961"/>
</dbReference>
<dbReference type="IntAct" id="P62318">
    <property type="interactions" value="176"/>
</dbReference>
<dbReference type="MINT" id="P62318"/>
<dbReference type="STRING" id="9606.ENSP00000215829"/>
<dbReference type="CarbonylDB" id="P62318"/>
<dbReference type="GlyGen" id="P62318">
    <property type="glycosylation" value="1 site, 1 O-linked glycan (1 site)"/>
</dbReference>
<dbReference type="iPTMnet" id="P62318"/>
<dbReference type="MetOSite" id="P62318"/>
<dbReference type="PhosphoSitePlus" id="P62318"/>
<dbReference type="SwissPalm" id="P62318"/>
<dbReference type="BioMuta" id="SNRPD3"/>
<dbReference type="DMDM" id="51338667"/>
<dbReference type="jPOST" id="P62318"/>
<dbReference type="MassIVE" id="P62318"/>
<dbReference type="PaxDb" id="9606-ENSP00000215829"/>
<dbReference type="PeptideAtlas" id="P62318"/>
<dbReference type="ProteomicsDB" id="4397"/>
<dbReference type="ProteomicsDB" id="57393">
    <molecule id="P62318-1"/>
</dbReference>
<dbReference type="Pumba" id="P62318"/>
<dbReference type="TopDownProteomics" id="P62318-1">
    <molecule id="P62318-1"/>
</dbReference>
<dbReference type="ABCD" id="P62318">
    <property type="antibodies" value="7 sequenced antibodies"/>
</dbReference>
<dbReference type="Antibodypedia" id="216">
    <property type="antibodies" value="223 antibodies from 32 providers"/>
</dbReference>
<dbReference type="DNASU" id="6634"/>
<dbReference type="Ensembl" id="ENST00000215829.8">
    <molecule id="P62318-1"/>
    <property type="protein sequence ID" value="ENSP00000215829.3"/>
    <property type="gene ID" value="ENSG00000100028.12"/>
</dbReference>
<dbReference type="Ensembl" id="ENST00000402849.5">
    <molecule id="P62318-2"/>
    <property type="protein sequence ID" value="ENSP00000385266.1"/>
    <property type="gene ID" value="ENSG00000100028.12"/>
</dbReference>
<dbReference type="GeneID" id="6634"/>
<dbReference type="KEGG" id="hsa:6634"/>
<dbReference type="MANE-Select" id="ENST00000215829.8">
    <property type="protein sequence ID" value="ENSP00000215829.3"/>
    <property type="RefSeq nucleotide sequence ID" value="NM_004175.5"/>
    <property type="RefSeq protein sequence ID" value="NP_004166.1"/>
</dbReference>
<dbReference type="UCSC" id="uc003aam.3">
    <molecule id="P62318-1"/>
    <property type="organism name" value="human"/>
</dbReference>
<dbReference type="AGR" id="HGNC:11160"/>
<dbReference type="CTD" id="6634"/>
<dbReference type="DisGeNET" id="6634"/>
<dbReference type="GeneCards" id="SNRPD3"/>
<dbReference type="HGNC" id="HGNC:11160">
    <property type="gene designation" value="SNRPD3"/>
</dbReference>
<dbReference type="HPA" id="ENSG00000100028">
    <property type="expression patterns" value="Low tissue specificity"/>
</dbReference>
<dbReference type="MIM" id="601062">
    <property type="type" value="gene"/>
</dbReference>
<dbReference type="neXtProt" id="NX_P62318"/>
<dbReference type="OpenTargets" id="ENSG00000100028"/>
<dbReference type="PharmGKB" id="PA36001"/>
<dbReference type="VEuPathDB" id="HostDB:ENSG00000100028"/>
<dbReference type="eggNOG" id="KOG3172">
    <property type="taxonomic scope" value="Eukaryota"/>
</dbReference>
<dbReference type="GeneTree" id="ENSGT00610000086153"/>
<dbReference type="HOGENOM" id="CLU_099537_1_0_1"/>
<dbReference type="InParanoid" id="P62318"/>
<dbReference type="OMA" id="HTITCET"/>
<dbReference type="OrthoDB" id="6425924at2759"/>
<dbReference type="PAN-GO" id="P62318">
    <property type="GO annotations" value="13 GO annotations based on evolutionary models"/>
</dbReference>
<dbReference type="PhylomeDB" id="P62318"/>
<dbReference type="TreeFam" id="TF354302"/>
<dbReference type="PathwayCommons" id="P62318"/>
<dbReference type="Reactome" id="R-HSA-111367">
    <property type="pathway name" value="SLBP independent Processing of Histone Pre-mRNAs"/>
</dbReference>
<dbReference type="Reactome" id="R-HSA-191859">
    <property type="pathway name" value="snRNP Assembly"/>
</dbReference>
<dbReference type="Reactome" id="R-HSA-72163">
    <property type="pathway name" value="mRNA Splicing - Major Pathway"/>
</dbReference>
<dbReference type="Reactome" id="R-HSA-72165">
    <property type="pathway name" value="mRNA Splicing - Minor Pathway"/>
</dbReference>
<dbReference type="Reactome" id="R-HSA-73856">
    <property type="pathway name" value="RNA Polymerase II Transcription Termination"/>
</dbReference>
<dbReference type="Reactome" id="R-HSA-77588">
    <property type="pathway name" value="SLBP Dependent Processing of Replication-Dependent Histone Pre-mRNAs"/>
</dbReference>
<dbReference type="Reactome" id="R-HSA-9754678">
    <property type="pathway name" value="SARS-CoV-2 modulates host translation machinery"/>
</dbReference>
<dbReference type="SignaLink" id="P62318"/>
<dbReference type="SIGNOR" id="P62318"/>
<dbReference type="BioGRID-ORCS" id="6634">
    <property type="hits" value="834 hits in 1135 CRISPR screens"/>
</dbReference>
<dbReference type="CD-CODE" id="91857CE7">
    <property type="entry name" value="Nucleolus"/>
</dbReference>
<dbReference type="ChiTaRS" id="SNRPD3">
    <property type="organism name" value="human"/>
</dbReference>
<dbReference type="EvolutionaryTrace" id="P62318"/>
<dbReference type="GeneWiki" id="SNRPD3"/>
<dbReference type="GenomeRNAi" id="6634"/>
<dbReference type="Pharos" id="P62318">
    <property type="development level" value="Tbio"/>
</dbReference>
<dbReference type="PRO" id="PR:P62318"/>
<dbReference type="Proteomes" id="UP000005640">
    <property type="component" value="Chromosome 22"/>
</dbReference>
<dbReference type="RNAct" id="P62318">
    <property type="molecule type" value="protein"/>
</dbReference>
<dbReference type="Bgee" id="ENSG00000100028">
    <property type="expression patterns" value="Expressed in ganglionic eminence and 114 other cell types or tissues"/>
</dbReference>
<dbReference type="GO" id="GO:0071013">
    <property type="term" value="C:catalytic step 2 spliceosome"/>
    <property type="evidence" value="ECO:0000314"/>
    <property type="project" value="UniProtKB"/>
</dbReference>
<dbReference type="GO" id="GO:0000243">
    <property type="term" value="C:commitment complex"/>
    <property type="evidence" value="ECO:0000318"/>
    <property type="project" value="GO_Central"/>
</dbReference>
<dbReference type="GO" id="GO:0005829">
    <property type="term" value="C:cytosol"/>
    <property type="evidence" value="ECO:0000314"/>
    <property type="project" value="HPA"/>
</dbReference>
<dbReference type="GO" id="GO:0034709">
    <property type="term" value="C:methylosome"/>
    <property type="evidence" value="ECO:0000314"/>
    <property type="project" value="UniProtKB"/>
</dbReference>
<dbReference type="GO" id="GO:0016604">
    <property type="term" value="C:nuclear body"/>
    <property type="evidence" value="ECO:0000314"/>
    <property type="project" value="HPA"/>
</dbReference>
<dbReference type="GO" id="GO:0005654">
    <property type="term" value="C:nucleoplasm"/>
    <property type="evidence" value="ECO:0000314"/>
    <property type="project" value="HPA"/>
</dbReference>
<dbReference type="GO" id="GO:0005634">
    <property type="term" value="C:nucleus"/>
    <property type="evidence" value="ECO:0000314"/>
    <property type="project" value="UniProtKB"/>
</dbReference>
<dbReference type="GO" id="GO:0034715">
    <property type="term" value="C:pICln-Sm protein complex"/>
    <property type="evidence" value="ECO:0000314"/>
    <property type="project" value="UniProtKB"/>
</dbReference>
<dbReference type="GO" id="GO:0071011">
    <property type="term" value="C:precatalytic spliceosome"/>
    <property type="evidence" value="ECO:0000318"/>
    <property type="project" value="GO_Central"/>
</dbReference>
<dbReference type="GO" id="GO:0030532">
    <property type="term" value="C:small nuclear ribonucleoprotein complex"/>
    <property type="evidence" value="ECO:0000304"/>
    <property type="project" value="ProtInc"/>
</dbReference>
<dbReference type="GO" id="GO:0034719">
    <property type="term" value="C:SMN-Sm protein complex"/>
    <property type="evidence" value="ECO:0000314"/>
    <property type="project" value="UniProtKB"/>
</dbReference>
<dbReference type="GO" id="GO:0005681">
    <property type="term" value="C:spliceosomal complex"/>
    <property type="evidence" value="ECO:0000353"/>
    <property type="project" value="ComplexPortal"/>
</dbReference>
<dbReference type="GO" id="GO:0097526">
    <property type="term" value="C:spliceosomal tri-snRNP complex"/>
    <property type="evidence" value="ECO:0000318"/>
    <property type="project" value="GO_Central"/>
</dbReference>
<dbReference type="GO" id="GO:0005697">
    <property type="term" value="C:telomerase holoenzyme complex"/>
    <property type="evidence" value="ECO:0000314"/>
    <property type="project" value="BHF-UCL"/>
</dbReference>
<dbReference type="GO" id="GO:0005685">
    <property type="term" value="C:U1 snRNP"/>
    <property type="evidence" value="ECO:0000314"/>
    <property type="project" value="UniProtKB"/>
</dbReference>
<dbReference type="GO" id="GO:0005689">
    <property type="term" value="C:U12-type spliceosomal complex"/>
    <property type="evidence" value="ECO:0000314"/>
    <property type="project" value="UniProtKB"/>
</dbReference>
<dbReference type="GO" id="GO:0005686">
    <property type="term" value="C:U2 snRNP"/>
    <property type="evidence" value="ECO:0000318"/>
    <property type="project" value="GO_Central"/>
</dbReference>
<dbReference type="GO" id="GO:0071007">
    <property type="term" value="C:U2-type catalytic step 2 spliceosome"/>
    <property type="evidence" value="ECO:0000314"/>
    <property type="project" value="UniProtKB"/>
</dbReference>
<dbReference type="GO" id="GO:0071005">
    <property type="term" value="C:U2-type precatalytic spliceosome"/>
    <property type="evidence" value="ECO:0000314"/>
    <property type="project" value="UniProtKB"/>
</dbReference>
<dbReference type="GO" id="GO:0005684">
    <property type="term" value="C:U2-type spliceosomal complex"/>
    <property type="evidence" value="ECO:0000314"/>
    <property type="project" value="UniProtKB"/>
</dbReference>
<dbReference type="GO" id="GO:0005687">
    <property type="term" value="C:U4 snRNP"/>
    <property type="evidence" value="ECO:0000314"/>
    <property type="project" value="UniProtKB"/>
</dbReference>
<dbReference type="GO" id="GO:0046540">
    <property type="term" value="C:U4/U6 x U5 tri-snRNP complex"/>
    <property type="evidence" value="ECO:0000314"/>
    <property type="project" value="UniProtKB"/>
</dbReference>
<dbReference type="GO" id="GO:0005682">
    <property type="term" value="C:U5 snRNP"/>
    <property type="evidence" value="ECO:0000318"/>
    <property type="project" value="GO_Central"/>
</dbReference>
<dbReference type="GO" id="GO:0005683">
    <property type="term" value="C:U7 snRNP"/>
    <property type="evidence" value="ECO:0000314"/>
    <property type="project" value="UniProtKB"/>
</dbReference>
<dbReference type="GO" id="GO:0019899">
    <property type="term" value="F:enzyme binding"/>
    <property type="evidence" value="ECO:0000353"/>
    <property type="project" value="UniProtKB"/>
</dbReference>
<dbReference type="GO" id="GO:0071208">
    <property type="term" value="F:histone pre-mRNA DCP binding"/>
    <property type="evidence" value="ECO:0000250"/>
    <property type="project" value="UniProtKB"/>
</dbReference>
<dbReference type="GO" id="GO:0003723">
    <property type="term" value="F:RNA binding"/>
    <property type="evidence" value="ECO:0000353"/>
    <property type="project" value="BHF-UCL"/>
</dbReference>
<dbReference type="GO" id="GO:0070034">
    <property type="term" value="F:telomerase RNA binding"/>
    <property type="evidence" value="ECO:0000353"/>
    <property type="project" value="BHF-UCL"/>
</dbReference>
<dbReference type="GO" id="GO:0071209">
    <property type="term" value="F:U7 snRNA binding"/>
    <property type="evidence" value="ECO:0000353"/>
    <property type="project" value="BHF-UCL"/>
</dbReference>
<dbReference type="GO" id="GO:0036261">
    <property type="term" value="P:7-methylguanosine cap hypermethylation"/>
    <property type="evidence" value="ECO:0000303"/>
    <property type="project" value="ComplexPortal"/>
</dbReference>
<dbReference type="GO" id="GO:0000398">
    <property type="term" value="P:mRNA splicing, via spliceosome"/>
    <property type="evidence" value="ECO:0000314"/>
    <property type="project" value="UniProtKB"/>
</dbReference>
<dbReference type="GO" id="GO:0006479">
    <property type="term" value="P:protein methylation"/>
    <property type="evidence" value="ECO:0000314"/>
    <property type="project" value="MGI"/>
</dbReference>
<dbReference type="GO" id="GO:0008380">
    <property type="term" value="P:RNA splicing"/>
    <property type="evidence" value="ECO:0000304"/>
    <property type="project" value="ProtInc"/>
</dbReference>
<dbReference type="GO" id="GO:0000387">
    <property type="term" value="P:spliceosomal snRNP assembly"/>
    <property type="evidence" value="ECO:0000314"/>
    <property type="project" value="UniProtKB"/>
</dbReference>
<dbReference type="GO" id="GO:1903241">
    <property type="term" value="P:U2-type prespliceosome assembly"/>
    <property type="evidence" value="ECO:0000303"/>
    <property type="project" value="ComplexPortal"/>
</dbReference>
<dbReference type="CDD" id="cd01721">
    <property type="entry name" value="Sm_D3"/>
    <property type="match status" value="1"/>
</dbReference>
<dbReference type="DisProt" id="DP01704"/>
<dbReference type="FunFam" id="2.30.30.100:FF:000002">
    <property type="entry name" value="Small nuclear ribonucleoprotein Sm D3"/>
    <property type="match status" value="1"/>
</dbReference>
<dbReference type="Gene3D" id="2.30.30.100">
    <property type="match status" value="1"/>
</dbReference>
<dbReference type="IDEAL" id="IID00161"/>
<dbReference type="InterPro" id="IPR027141">
    <property type="entry name" value="LSm4/Sm_D1/D3"/>
</dbReference>
<dbReference type="InterPro" id="IPR010920">
    <property type="entry name" value="LSM_dom_sf"/>
</dbReference>
<dbReference type="InterPro" id="IPR047575">
    <property type="entry name" value="Sm"/>
</dbReference>
<dbReference type="InterPro" id="IPR001163">
    <property type="entry name" value="Sm_dom_euk/arc"/>
</dbReference>
<dbReference type="InterPro" id="IPR034099">
    <property type="entry name" value="SmD3"/>
</dbReference>
<dbReference type="PANTHER" id="PTHR23338">
    <property type="entry name" value="SMALL NUCLEAR RIBONUCLEOPROTEIN SM"/>
    <property type="match status" value="1"/>
</dbReference>
<dbReference type="Pfam" id="PF01423">
    <property type="entry name" value="LSM"/>
    <property type="match status" value="1"/>
</dbReference>
<dbReference type="SMART" id="SM00651">
    <property type="entry name" value="Sm"/>
    <property type="match status" value="1"/>
</dbReference>
<dbReference type="SUPFAM" id="SSF50182">
    <property type="entry name" value="Sm-like ribonucleoproteins"/>
    <property type="match status" value="1"/>
</dbReference>
<dbReference type="PROSITE" id="PS52002">
    <property type="entry name" value="SM"/>
    <property type="match status" value="1"/>
</dbReference>
<protein>
    <recommendedName>
        <fullName>Small nuclear ribonucleoprotein Sm D3</fullName>
        <shortName>Sm-D3</shortName>
    </recommendedName>
    <alternativeName>
        <fullName>snRNP core protein D3</fullName>
    </alternativeName>
</protein>
<keyword id="KW-0002">3D-structure</keyword>
<keyword id="KW-0007">Acetylation</keyword>
<keyword id="KW-0025">Alternative splicing</keyword>
<keyword id="KW-0963">Cytoplasm</keyword>
<keyword id="KW-0903">Direct protein sequencing</keyword>
<keyword id="KW-0488">Methylation</keyword>
<keyword id="KW-0507">mRNA processing</keyword>
<keyword id="KW-0508">mRNA splicing</keyword>
<keyword id="KW-0539">Nucleus</keyword>
<keyword id="KW-1267">Proteomics identification</keyword>
<keyword id="KW-1185">Reference proteome</keyword>
<keyword id="KW-0677">Repeat</keyword>
<keyword id="KW-0687">Ribonucleoprotein</keyword>
<keyword id="KW-0694">RNA-binding</keyword>
<keyword id="KW-0747">Spliceosome</keyword>